<sequence>MAQTTNDIKNGSILNLDGQLWQVIKFQHVKPGKGPAFVRTTIKNVLSGKIVDKTFNAGMKMDFETVDNRTLQYSYEDGDNFVFMDMTTFDQIMIPKTLVGDKAKYLLEGTDCIVSFHDGQPLSVELPASVVLTITHTEPGLQGNRSNAGTKPATVETGAEIQVPLFIGEGEKVKVNTDDGSYLGREN</sequence>
<comment type="function">
    <text evidence="1">Involved in peptide bond synthesis. Stimulates efficient translation and peptide-bond synthesis on native or reconstituted 70S ribosomes in vitro. Probably functions indirectly by altering the affinity of the ribosome for aminoacyl-tRNA, thus increasing their reactivity as acceptors for peptidyl transferase.</text>
</comment>
<comment type="pathway">
    <text evidence="1">Protein biosynthesis; polypeptide chain elongation.</text>
</comment>
<comment type="subcellular location">
    <subcellularLocation>
        <location evidence="1">Cytoplasm</location>
    </subcellularLocation>
</comment>
<comment type="similarity">
    <text evidence="1">Belongs to the elongation factor P family.</text>
</comment>
<organism>
    <name type="scientific">Bifidobacterium animalis subsp. lactis (strain AD011)</name>
    <dbReference type="NCBI Taxonomy" id="442563"/>
    <lineage>
        <taxon>Bacteria</taxon>
        <taxon>Bacillati</taxon>
        <taxon>Actinomycetota</taxon>
        <taxon>Actinomycetes</taxon>
        <taxon>Bifidobacteriales</taxon>
        <taxon>Bifidobacteriaceae</taxon>
        <taxon>Bifidobacterium</taxon>
    </lineage>
</organism>
<feature type="chain" id="PRO_1000122991" description="Elongation factor P">
    <location>
        <begin position="1"/>
        <end position="187"/>
    </location>
</feature>
<accession>B8DTW0</accession>
<reference key="1">
    <citation type="journal article" date="2009" name="J. Bacteriol.">
        <title>Genome sequence of the probiotic bacterium Bifidobacterium animalis subsp. lactis AD011.</title>
        <authorList>
            <person name="Kim J.F."/>
            <person name="Jeong H."/>
            <person name="Yu D.S."/>
            <person name="Choi S.-H."/>
            <person name="Hur C.-G."/>
            <person name="Park M.-S."/>
            <person name="Yoon S.H."/>
            <person name="Kim D.-W."/>
            <person name="Ji G.E."/>
            <person name="Park H.-S."/>
            <person name="Oh T.K."/>
        </authorList>
    </citation>
    <scope>NUCLEOTIDE SEQUENCE [LARGE SCALE GENOMIC DNA]</scope>
    <source>
        <strain>AD011</strain>
    </source>
</reference>
<gene>
    <name evidence="1" type="primary">efp</name>
    <name type="ordered locus">BLA_1151</name>
</gene>
<proteinExistence type="inferred from homology"/>
<protein>
    <recommendedName>
        <fullName evidence="1">Elongation factor P</fullName>
        <shortName evidence="1">EF-P</shortName>
    </recommendedName>
</protein>
<keyword id="KW-0963">Cytoplasm</keyword>
<keyword id="KW-0251">Elongation factor</keyword>
<keyword id="KW-0648">Protein biosynthesis</keyword>
<keyword id="KW-1185">Reference proteome</keyword>
<dbReference type="EMBL" id="CP001213">
    <property type="protein sequence ID" value="ACL29439.1"/>
    <property type="molecule type" value="Genomic_DNA"/>
</dbReference>
<dbReference type="RefSeq" id="WP_004218881.1">
    <property type="nucleotide sequence ID" value="NC_011835.1"/>
</dbReference>
<dbReference type="SMR" id="B8DTW0"/>
<dbReference type="STRING" id="442563.BLA_1151"/>
<dbReference type="GeneID" id="29696463"/>
<dbReference type="KEGG" id="bla:BLA_1151"/>
<dbReference type="HOGENOM" id="CLU_074944_0_1_11"/>
<dbReference type="UniPathway" id="UPA00345"/>
<dbReference type="Proteomes" id="UP000002456">
    <property type="component" value="Chromosome"/>
</dbReference>
<dbReference type="GO" id="GO:0005737">
    <property type="term" value="C:cytoplasm"/>
    <property type="evidence" value="ECO:0007669"/>
    <property type="project" value="UniProtKB-SubCell"/>
</dbReference>
<dbReference type="GO" id="GO:0003746">
    <property type="term" value="F:translation elongation factor activity"/>
    <property type="evidence" value="ECO:0007669"/>
    <property type="project" value="UniProtKB-UniRule"/>
</dbReference>
<dbReference type="GO" id="GO:0043043">
    <property type="term" value="P:peptide biosynthetic process"/>
    <property type="evidence" value="ECO:0007669"/>
    <property type="project" value="InterPro"/>
</dbReference>
<dbReference type="CDD" id="cd04470">
    <property type="entry name" value="S1_EF-P_repeat_1"/>
    <property type="match status" value="1"/>
</dbReference>
<dbReference type="CDD" id="cd05794">
    <property type="entry name" value="S1_EF-P_repeat_2"/>
    <property type="match status" value="1"/>
</dbReference>
<dbReference type="FunFam" id="2.30.30.30:FF:000003">
    <property type="entry name" value="Elongation factor P"/>
    <property type="match status" value="1"/>
</dbReference>
<dbReference type="FunFam" id="2.40.50.140:FF:000004">
    <property type="entry name" value="Elongation factor P"/>
    <property type="match status" value="1"/>
</dbReference>
<dbReference type="FunFam" id="2.40.50.140:FF:000009">
    <property type="entry name" value="Elongation factor P"/>
    <property type="match status" value="1"/>
</dbReference>
<dbReference type="Gene3D" id="2.30.30.30">
    <property type="match status" value="1"/>
</dbReference>
<dbReference type="Gene3D" id="2.40.50.140">
    <property type="entry name" value="Nucleic acid-binding proteins"/>
    <property type="match status" value="2"/>
</dbReference>
<dbReference type="HAMAP" id="MF_00141">
    <property type="entry name" value="EF_P"/>
    <property type="match status" value="1"/>
</dbReference>
<dbReference type="InterPro" id="IPR015365">
    <property type="entry name" value="Elong-fact-P_C"/>
</dbReference>
<dbReference type="InterPro" id="IPR012340">
    <property type="entry name" value="NA-bd_OB-fold"/>
</dbReference>
<dbReference type="InterPro" id="IPR014722">
    <property type="entry name" value="Rib_uL2_dom2"/>
</dbReference>
<dbReference type="InterPro" id="IPR020599">
    <property type="entry name" value="Transl_elong_fac_P/YeiP"/>
</dbReference>
<dbReference type="InterPro" id="IPR013185">
    <property type="entry name" value="Transl_elong_KOW-like"/>
</dbReference>
<dbReference type="InterPro" id="IPR001059">
    <property type="entry name" value="Transl_elong_P/YeiP_cen"/>
</dbReference>
<dbReference type="InterPro" id="IPR013852">
    <property type="entry name" value="Transl_elong_P/YeiP_CS"/>
</dbReference>
<dbReference type="InterPro" id="IPR011768">
    <property type="entry name" value="Transl_elongation_fac_P"/>
</dbReference>
<dbReference type="InterPro" id="IPR008991">
    <property type="entry name" value="Translation_prot_SH3-like_sf"/>
</dbReference>
<dbReference type="NCBIfam" id="TIGR00038">
    <property type="entry name" value="efp"/>
    <property type="match status" value="1"/>
</dbReference>
<dbReference type="NCBIfam" id="NF001810">
    <property type="entry name" value="PRK00529.1"/>
    <property type="match status" value="1"/>
</dbReference>
<dbReference type="PANTHER" id="PTHR30053">
    <property type="entry name" value="ELONGATION FACTOR P"/>
    <property type="match status" value="1"/>
</dbReference>
<dbReference type="PANTHER" id="PTHR30053:SF12">
    <property type="entry name" value="ELONGATION FACTOR P (EF-P) FAMILY PROTEIN"/>
    <property type="match status" value="1"/>
</dbReference>
<dbReference type="Pfam" id="PF01132">
    <property type="entry name" value="EFP"/>
    <property type="match status" value="1"/>
</dbReference>
<dbReference type="Pfam" id="PF08207">
    <property type="entry name" value="EFP_N"/>
    <property type="match status" value="1"/>
</dbReference>
<dbReference type="Pfam" id="PF09285">
    <property type="entry name" value="Elong-fact-P_C"/>
    <property type="match status" value="1"/>
</dbReference>
<dbReference type="PIRSF" id="PIRSF005901">
    <property type="entry name" value="EF-P"/>
    <property type="match status" value="1"/>
</dbReference>
<dbReference type="SMART" id="SM01185">
    <property type="entry name" value="EFP"/>
    <property type="match status" value="1"/>
</dbReference>
<dbReference type="SMART" id="SM00841">
    <property type="entry name" value="Elong-fact-P_C"/>
    <property type="match status" value="1"/>
</dbReference>
<dbReference type="SUPFAM" id="SSF50249">
    <property type="entry name" value="Nucleic acid-binding proteins"/>
    <property type="match status" value="2"/>
</dbReference>
<dbReference type="SUPFAM" id="SSF50104">
    <property type="entry name" value="Translation proteins SH3-like domain"/>
    <property type="match status" value="1"/>
</dbReference>
<dbReference type="PROSITE" id="PS01275">
    <property type="entry name" value="EFP"/>
    <property type="match status" value="1"/>
</dbReference>
<evidence type="ECO:0000255" key="1">
    <source>
        <dbReference type="HAMAP-Rule" id="MF_00141"/>
    </source>
</evidence>
<name>EFP_BIFA0</name>